<proteinExistence type="evidence at protein level"/>
<name>TTPAL_MOUSE</name>
<accession>Q9D3D0</accession>
<accession>A6PW51</accession>
<accession>Q3U0R3</accession>
<accession>Q7TS94</accession>
<feature type="chain" id="PRO_0000210773" description="Alpha-tocopherol transfer protein-like">
    <location>
        <begin position="1"/>
        <end position="343"/>
    </location>
</feature>
<feature type="domain" description="CRAL-TRIO" evidence="1">
    <location>
        <begin position="118"/>
        <end position="283"/>
    </location>
</feature>
<feature type="region of interest" description="Disordered" evidence="2">
    <location>
        <begin position="1"/>
        <end position="29"/>
    </location>
</feature>
<feature type="compositionally biased region" description="Polar residues" evidence="2">
    <location>
        <begin position="8"/>
        <end position="19"/>
    </location>
</feature>
<feature type="splice variant" id="VSP_006032" description="In isoform 2." evidence="3">
    <original>DRWIPSNYPITENIRAVYL</original>
    <variation>GWLPHSDKSSSHSERTSDI</variation>
    <location>
        <begin position="150"/>
        <end position="168"/>
    </location>
</feature>
<feature type="splice variant" id="VSP_006033" description="In isoform 2." evidence="3">
    <location>
        <begin position="169"/>
        <end position="343"/>
    </location>
</feature>
<comment type="function">
    <text evidence="4">May act as a protein that binds a hydrophobic ligand.</text>
</comment>
<comment type="alternative products">
    <event type="alternative splicing"/>
    <isoform>
        <id>Q9D3D0-1</id>
        <name>1</name>
        <sequence type="displayed"/>
    </isoform>
    <isoform>
        <id>Q9D3D0-2</id>
        <name>2</name>
        <sequence type="described" ref="VSP_006032 VSP_006033"/>
    </isoform>
</comment>
<comment type="sequence caution" evidence="4">
    <conflict type="erroneous initiation">
        <sequence resource="EMBL-CDS" id="BAC28381"/>
    </conflict>
</comment>
<comment type="sequence caution" evidence="4">
    <conflict type="erroneous initiation">
        <sequence resource="EMBL-CDS" id="BAC30352"/>
    </conflict>
</comment>
<comment type="sequence caution" evidence="4">
    <conflict type="erroneous initiation">
        <sequence resource="EMBL-CDS" id="BAC31654"/>
    </conflict>
</comment>
<comment type="sequence caution" evidence="4">
    <conflict type="erroneous initiation">
        <sequence resource="EMBL-CDS" id="BAC38289"/>
    </conflict>
</comment>
<reference key="1">
    <citation type="journal article" date="2005" name="Science">
        <title>The transcriptional landscape of the mammalian genome.</title>
        <authorList>
            <person name="Carninci P."/>
            <person name="Kasukawa T."/>
            <person name="Katayama S."/>
            <person name="Gough J."/>
            <person name="Frith M.C."/>
            <person name="Maeda N."/>
            <person name="Oyama R."/>
            <person name="Ravasi T."/>
            <person name="Lenhard B."/>
            <person name="Wells C."/>
            <person name="Kodzius R."/>
            <person name="Shimokawa K."/>
            <person name="Bajic V.B."/>
            <person name="Brenner S.E."/>
            <person name="Batalov S."/>
            <person name="Forrest A.R."/>
            <person name="Zavolan M."/>
            <person name="Davis M.J."/>
            <person name="Wilming L.G."/>
            <person name="Aidinis V."/>
            <person name="Allen J.E."/>
            <person name="Ambesi-Impiombato A."/>
            <person name="Apweiler R."/>
            <person name="Aturaliya R.N."/>
            <person name="Bailey T.L."/>
            <person name="Bansal M."/>
            <person name="Baxter L."/>
            <person name="Beisel K.W."/>
            <person name="Bersano T."/>
            <person name="Bono H."/>
            <person name="Chalk A.M."/>
            <person name="Chiu K.P."/>
            <person name="Choudhary V."/>
            <person name="Christoffels A."/>
            <person name="Clutterbuck D.R."/>
            <person name="Crowe M.L."/>
            <person name="Dalla E."/>
            <person name="Dalrymple B.P."/>
            <person name="de Bono B."/>
            <person name="Della Gatta G."/>
            <person name="di Bernardo D."/>
            <person name="Down T."/>
            <person name="Engstrom P."/>
            <person name="Fagiolini M."/>
            <person name="Faulkner G."/>
            <person name="Fletcher C.F."/>
            <person name="Fukushima T."/>
            <person name="Furuno M."/>
            <person name="Futaki S."/>
            <person name="Gariboldi M."/>
            <person name="Georgii-Hemming P."/>
            <person name="Gingeras T.R."/>
            <person name="Gojobori T."/>
            <person name="Green R.E."/>
            <person name="Gustincich S."/>
            <person name="Harbers M."/>
            <person name="Hayashi Y."/>
            <person name="Hensch T.K."/>
            <person name="Hirokawa N."/>
            <person name="Hill D."/>
            <person name="Huminiecki L."/>
            <person name="Iacono M."/>
            <person name="Ikeo K."/>
            <person name="Iwama A."/>
            <person name="Ishikawa T."/>
            <person name="Jakt M."/>
            <person name="Kanapin A."/>
            <person name="Katoh M."/>
            <person name="Kawasawa Y."/>
            <person name="Kelso J."/>
            <person name="Kitamura H."/>
            <person name="Kitano H."/>
            <person name="Kollias G."/>
            <person name="Krishnan S.P."/>
            <person name="Kruger A."/>
            <person name="Kummerfeld S.K."/>
            <person name="Kurochkin I.V."/>
            <person name="Lareau L.F."/>
            <person name="Lazarevic D."/>
            <person name="Lipovich L."/>
            <person name="Liu J."/>
            <person name="Liuni S."/>
            <person name="McWilliam S."/>
            <person name="Madan Babu M."/>
            <person name="Madera M."/>
            <person name="Marchionni L."/>
            <person name="Matsuda H."/>
            <person name="Matsuzawa S."/>
            <person name="Miki H."/>
            <person name="Mignone F."/>
            <person name="Miyake S."/>
            <person name="Morris K."/>
            <person name="Mottagui-Tabar S."/>
            <person name="Mulder N."/>
            <person name="Nakano N."/>
            <person name="Nakauchi H."/>
            <person name="Ng P."/>
            <person name="Nilsson R."/>
            <person name="Nishiguchi S."/>
            <person name="Nishikawa S."/>
            <person name="Nori F."/>
            <person name="Ohara O."/>
            <person name="Okazaki Y."/>
            <person name="Orlando V."/>
            <person name="Pang K.C."/>
            <person name="Pavan W.J."/>
            <person name="Pavesi G."/>
            <person name="Pesole G."/>
            <person name="Petrovsky N."/>
            <person name="Piazza S."/>
            <person name="Reed J."/>
            <person name="Reid J.F."/>
            <person name="Ring B.Z."/>
            <person name="Ringwald M."/>
            <person name="Rost B."/>
            <person name="Ruan Y."/>
            <person name="Salzberg S.L."/>
            <person name="Sandelin A."/>
            <person name="Schneider C."/>
            <person name="Schoenbach C."/>
            <person name="Sekiguchi K."/>
            <person name="Semple C.A."/>
            <person name="Seno S."/>
            <person name="Sessa L."/>
            <person name="Sheng Y."/>
            <person name="Shibata Y."/>
            <person name="Shimada H."/>
            <person name="Shimada K."/>
            <person name="Silva D."/>
            <person name="Sinclair B."/>
            <person name="Sperling S."/>
            <person name="Stupka E."/>
            <person name="Sugiura K."/>
            <person name="Sultana R."/>
            <person name="Takenaka Y."/>
            <person name="Taki K."/>
            <person name="Tammoja K."/>
            <person name="Tan S.L."/>
            <person name="Tang S."/>
            <person name="Taylor M.S."/>
            <person name="Tegner J."/>
            <person name="Teichmann S.A."/>
            <person name="Ueda H.R."/>
            <person name="van Nimwegen E."/>
            <person name="Verardo R."/>
            <person name="Wei C.L."/>
            <person name="Yagi K."/>
            <person name="Yamanishi H."/>
            <person name="Zabarovsky E."/>
            <person name="Zhu S."/>
            <person name="Zimmer A."/>
            <person name="Hide W."/>
            <person name="Bult C."/>
            <person name="Grimmond S.M."/>
            <person name="Teasdale R.D."/>
            <person name="Liu E.T."/>
            <person name="Brusic V."/>
            <person name="Quackenbush J."/>
            <person name="Wahlestedt C."/>
            <person name="Mattick J.S."/>
            <person name="Hume D.A."/>
            <person name="Kai C."/>
            <person name="Sasaki D."/>
            <person name="Tomaru Y."/>
            <person name="Fukuda S."/>
            <person name="Kanamori-Katayama M."/>
            <person name="Suzuki M."/>
            <person name="Aoki J."/>
            <person name="Arakawa T."/>
            <person name="Iida J."/>
            <person name="Imamura K."/>
            <person name="Itoh M."/>
            <person name="Kato T."/>
            <person name="Kawaji H."/>
            <person name="Kawagashira N."/>
            <person name="Kawashima T."/>
            <person name="Kojima M."/>
            <person name="Kondo S."/>
            <person name="Konno H."/>
            <person name="Nakano K."/>
            <person name="Ninomiya N."/>
            <person name="Nishio T."/>
            <person name="Okada M."/>
            <person name="Plessy C."/>
            <person name="Shibata K."/>
            <person name="Shiraki T."/>
            <person name="Suzuki S."/>
            <person name="Tagami M."/>
            <person name="Waki K."/>
            <person name="Watahiki A."/>
            <person name="Okamura-Oho Y."/>
            <person name="Suzuki H."/>
            <person name="Kawai J."/>
            <person name="Hayashizaki Y."/>
        </authorList>
    </citation>
    <scope>NUCLEOTIDE SEQUENCE [LARGE SCALE MRNA] (ISOFORMS 1 AND 2)</scope>
    <source>
        <strain>C57BL/6J</strain>
        <strain>NOD</strain>
        <tissue>Brain cortex</tissue>
        <tissue>Cecum</tissue>
        <tissue>Embryonic head</tissue>
        <tissue>Spinal cord</tissue>
        <tissue>Spleen</tissue>
        <tissue>Thymus</tissue>
    </source>
</reference>
<reference key="2">
    <citation type="journal article" date="2009" name="PLoS Biol.">
        <title>Lineage-specific biology revealed by a finished genome assembly of the mouse.</title>
        <authorList>
            <person name="Church D.M."/>
            <person name="Goodstadt L."/>
            <person name="Hillier L.W."/>
            <person name="Zody M.C."/>
            <person name="Goldstein S."/>
            <person name="She X."/>
            <person name="Bult C.J."/>
            <person name="Agarwala R."/>
            <person name="Cherry J.L."/>
            <person name="DiCuccio M."/>
            <person name="Hlavina W."/>
            <person name="Kapustin Y."/>
            <person name="Meric P."/>
            <person name="Maglott D."/>
            <person name="Birtle Z."/>
            <person name="Marques A.C."/>
            <person name="Graves T."/>
            <person name="Zhou S."/>
            <person name="Teague B."/>
            <person name="Potamousis K."/>
            <person name="Churas C."/>
            <person name="Place M."/>
            <person name="Herschleb J."/>
            <person name="Runnheim R."/>
            <person name="Forrest D."/>
            <person name="Amos-Landgraf J."/>
            <person name="Schwartz D.C."/>
            <person name="Cheng Z."/>
            <person name="Lindblad-Toh K."/>
            <person name="Eichler E.E."/>
            <person name="Ponting C.P."/>
        </authorList>
    </citation>
    <scope>NUCLEOTIDE SEQUENCE [LARGE SCALE GENOMIC DNA]</scope>
    <source>
        <strain>C57BL/6J</strain>
    </source>
</reference>
<reference key="3">
    <citation type="journal article" date="2004" name="Genome Res.">
        <title>The status, quality, and expansion of the NIH full-length cDNA project: the Mammalian Gene Collection (MGC).</title>
        <authorList>
            <consortium name="The MGC Project Team"/>
        </authorList>
    </citation>
    <scope>NUCLEOTIDE SEQUENCE [LARGE SCALE MRNA] (ISOFORM 1)</scope>
    <source>
        <strain>C57BL/6J</strain>
        <tissue>Embryonic brain</tissue>
    </source>
</reference>
<reference key="4">
    <citation type="journal article" date="2010" name="Cell">
        <title>A tissue-specific atlas of mouse protein phosphorylation and expression.</title>
        <authorList>
            <person name="Huttlin E.L."/>
            <person name="Jedrychowski M.P."/>
            <person name="Elias J.E."/>
            <person name="Goswami T."/>
            <person name="Rad R."/>
            <person name="Beausoleil S.A."/>
            <person name="Villen J."/>
            <person name="Haas W."/>
            <person name="Sowa M.E."/>
            <person name="Gygi S.P."/>
        </authorList>
    </citation>
    <scope>IDENTIFICATION BY MASS SPECTROMETRY [LARGE SCALE ANALYSIS]</scope>
    <source>
        <tissue>Spleen</tissue>
    </source>
</reference>
<keyword id="KW-0025">Alternative splicing</keyword>
<keyword id="KW-1185">Reference proteome</keyword>
<keyword id="KW-0813">Transport</keyword>
<protein>
    <recommendedName>
        <fullName>Alpha-tocopherol transfer protein-like</fullName>
    </recommendedName>
</protein>
<sequence length="343" mass="38836">MSEESDSLRTSPSVASLSENELPLPPPDPPGYVCSLTEDLVTKAREELQEKPEWRLRDVQALRDMVRKEYPYLSTSLDDAFLLRFLRARKFDYDRALQLLVNYHGCRRSWPEVFSNLRPSALKDVLNSGFLTVLPHTDPRGCHVLCIRPDRWIPSNYPITENIRAVYLTLEKLIQSEETQVNGIVILADYKGVSLSKASHFGPFIAKKVIGILQDGFPIRIKAVHIVNEPRIFKGIFAIIKPFLKEKIANRFFLHGSDLNSLHTNLPRNILPKEYGGTAGELDTASWNAVLLASEEDFVKEFCQPMPACDNLLGQPLLPEGLISDAQCDDSMRAMKSQLYSCY</sequence>
<dbReference type="EMBL" id="AK018052">
    <property type="status" value="NOT_ANNOTATED_CDS"/>
    <property type="molecule type" value="mRNA"/>
</dbReference>
<dbReference type="EMBL" id="AK033600">
    <property type="protein sequence ID" value="BAC28381.1"/>
    <property type="status" value="ALT_INIT"/>
    <property type="molecule type" value="mRNA"/>
</dbReference>
<dbReference type="EMBL" id="AK039450">
    <property type="protein sequence ID" value="BAC30352.1"/>
    <property type="status" value="ALT_INIT"/>
    <property type="molecule type" value="mRNA"/>
</dbReference>
<dbReference type="EMBL" id="AK043791">
    <property type="protein sequence ID" value="BAC31654.1"/>
    <property type="status" value="ALT_INIT"/>
    <property type="molecule type" value="mRNA"/>
</dbReference>
<dbReference type="EMBL" id="AK081680">
    <property type="protein sequence ID" value="BAC38289.1"/>
    <property type="status" value="ALT_INIT"/>
    <property type="molecule type" value="mRNA"/>
</dbReference>
<dbReference type="EMBL" id="AK156641">
    <property type="protein sequence ID" value="BAE33788.1"/>
    <property type="molecule type" value="mRNA"/>
</dbReference>
<dbReference type="EMBL" id="AL591488">
    <property type="status" value="NOT_ANNOTATED_CDS"/>
    <property type="molecule type" value="Genomic_DNA"/>
</dbReference>
<dbReference type="EMBL" id="BC052389">
    <property type="protein sequence ID" value="AAH52389.3"/>
    <property type="molecule type" value="mRNA"/>
</dbReference>
<dbReference type="CCDS" id="CCDS38317.1">
    <molecule id="Q9D3D0-1"/>
</dbReference>
<dbReference type="RefSeq" id="NP_001292732.1">
    <property type="nucleotide sequence ID" value="NM_001305803.1"/>
</dbReference>
<dbReference type="RefSeq" id="NP_083788.2">
    <molecule id="Q9D3D0-1"/>
    <property type="nucleotide sequence ID" value="NM_029512.2"/>
</dbReference>
<dbReference type="RefSeq" id="NP_859423.2">
    <molecule id="Q9D3D0-1"/>
    <property type="nucleotide sequence ID" value="NM_181734.3"/>
</dbReference>
<dbReference type="RefSeq" id="XP_006500424.1">
    <molecule id="Q9D3D0-1"/>
    <property type="nucleotide sequence ID" value="XM_006500361.3"/>
</dbReference>
<dbReference type="RefSeq" id="XP_006500425.1">
    <molecule id="Q9D3D0-1"/>
    <property type="nucleotide sequence ID" value="XM_006500362.3"/>
</dbReference>
<dbReference type="SMR" id="Q9D3D0"/>
<dbReference type="BioGRID" id="217950">
    <property type="interactions" value="1"/>
</dbReference>
<dbReference type="FunCoup" id="Q9D3D0">
    <property type="interactions" value="1234"/>
</dbReference>
<dbReference type="STRING" id="10090.ENSMUSP00000128922"/>
<dbReference type="iPTMnet" id="Q9D3D0"/>
<dbReference type="PhosphoSitePlus" id="Q9D3D0"/>
<dbReference type="SwissPalm" id="Q9D3D0"/>
<dbReference type="PaxDb" id="10090-ENSMUSP00000128922"/>
<dbReference type="PeptideAtlas" id="Q9D3D0"/>
<dbReference type="ProteomicsDB" id="298023">
    <molecule id="Q9D3D0-1"/>
</dbReference>
<dbReference type="ProteomicsDB" id="298024">
    <molecule id="Q9D3D0-2"/>
</dbReference>
<dbReference type="Pumba" id="Q9D3D0"/>
<dbReference type="Antibodypedia" id="51852">
    <property type="antibodies" value="60 antibodies from 13 providers"/>
</dbReference>
<dbReference type="DNASU" id="76080"/>
<dbReference type="Ensembl" id="ENSMUST00000109405.10">
    <molecule id="Q9D3D0-2"/>
    <property type="protein sequence ID" value="ENSMUSP00000105032.4"/>
    <property type="gene ID" value="ENSMUSG00000017679.17"/>
</dbReference>
<dbReference type="Ensembl" id="ENSMUST00000109408.10">
    <molecule id="Q9D3D0-1"/>
    <property type="protein sequence ID" value="ENSMUSP00000105035.4"/>
    <property type="gene ID" value="ENSMUSG00000017679.17"/>
</dbReference>
<dbReference type="Ensembl" id="ENSMUST00000171696.8">
    <molecule id="Q9D3D0-1"/>
    <property type="protein sequence ID" value="ENSMUSP00000128922.2"/>
    <property type="gene ID" value="ENSMUSG00000017679.17"/>
</dbReference>
<dbReference type="GeneID" id="76080"/>
<dbReference type="KEGG" id="mmu:76080"/>
<dbReference type="UCSC" id="uc008ntc.1">
    <molecule id="Q9D3D0-1"/>
    <property type="organism name" value="mouse"/>
</dbReference>
<dbReference type="UCSC" id="uc008ntf.1">
    <molecule id="Q9D3D0-2"/>
    <property type="organism name" value="mouse"/>
</dbReference>
<dbReference type="AGR" id="MGI:1923330"/>
<dbReference type="CTD" id="79183"/>
<dbReference type="MGI" id="MGI:1923330">
    <property type="gene designation" value="Ttpal"/>
</dbReference>
<dbReference type="VEuPathDB" id="HostDB:ENSMUSG00000017679"/>
<dbReference type="eggNOG" id="KOG1471">
    <property type="taxonomic scope" value="Eukaryota"/>
</dbReference>
<dbReference type="GeneTree" id="ENSGT00940000155407"/>
<dbReference type="HOGENOM" id="CLU_046597_1_3_1"/>
<dbReference type="InParanoid" id="Q9D3D0"/>
<dbReference type="OMA" id="VQCDDSM"/>
<dbReference type="OrthoDB" id="6682367at2759"/>
<dbReference type="PhylomeDB" id="Q9D3D0"/>
<dbReference type="BioGRID-ORCS" id="76080">
    <property type="hits" value="0 hits in 76 CRISPR screens"/>
</dbReference>
<dbReference type="ChiTaRS" id="Ttpal">
    <property type="organism name" value="mouse"/>
</dbReference>
<dbReference type="PRO" id="PR:Q9D3D0"/>
<dbReference type="Proteomes" id="UP000000589">
    <property type="component" value="Chromosome 2"/>
</dbReference>
<dbReference type="RNAct" id="Q9D3D0">
    <property type="molecule type" value="protein"/>
</dbReference>
<dbReference type="Bgee" id="ENSMUSG00000017679">
    <property type="expression patterns" value="Expressed in esophagus and 223 other cell types or tissues"/>
</dbReference>
<dbReference type="ExpressionAtlas" id="Q9D3D0">
    <property type="expression patterns" value="baseline and differential"/>
</dbReference>
<dbReference type="CDD" id="cd00170">
    <property type="entry name" value="SEC14"/>
    <property type="match status" value="1"/>
</dbReference>
<dbReference type="FunFam" id="1.10.8.20:FF:000001">
    <property type="entry name" value="Alpha-tocopherol transfer protein-like"/>
    <property type="match status" value="1"/>
</dbReference>
<dbReference type="FunFam" id="3.40.525.10:FF:000002">
    <property type="entry name" value="Alpha-tocopherol transfer protein-like"/>
    <property type="match status" value="1"/>
</dbReference>
<dbReference type="Gene3D" id="1.20.5.1200">
    <property type="entry name" value="Alpha-tocopherol transfer"/>
    <property type="match status" value="1"/>
</dbReference>
<dbReference type="Gene3D" id="3.40.525.10">
    <property type="entry name" value="CRAL-TRIO lipid binding domain"/>
    <property type="match status" value="1"/>
</dbReference>
<dbReference type="Gene3D" id="1.10.8.20">
    <property type="entry name" value="N-terminal domain of phosphatidylinositol transfer protein sec14p"/>
    <property type="match status" value="1"/>
</dbReference>
<dbReference type="InterPro" id="IPR001251">
    <property type="entry name" value="CRAL-TRIO_dom"/>
</dbReference>
<dbReference type="InterPro" id="IPR036865">
    <property type="entry name" value="CRAL-TRIO_dom_sf"/>
</dbReference>
<dbReference type="InterPro" id="IPR011074">
    <property type="entry name" value="CRAL/TRIO_N_dom"/>
</dbReference>
<dbReference type="InterPro" id="IPR036273">
    <property type="entry name" value="CRAL/TRIO_N_dom_sf"/>
</dbReference>
<dbReference type="PANTHER" id="PTHR10174:SF130">
    <property type="entry name" value="ALPHA-TOCOPHEROL TRANSFER PROTEIN-LIKE"/>
    <property type="match status" value="1"/>
</dbReference>
<dbReference type="PANTHER" id="PTHR10174">
    <property type="entry name" value="ALPHA-TOCOPHEROL TRANSFER PROTEIN-RELATED"/>
    <property type="match status" value="1"/>
</dbReference>
<dbReference type="Pfam" id="PF00650">
    <property type="entry name" value="CRAL_TRIO"/>
    <property type="match status" value="1"/>
</dbReference>
<dbReference type="Pfam" id="PF03765">
    <property type="entry name" value="CRAL_TRIO_N"/>
    <property type="match status" value="1"/>
</dbReference>
<dbReference type="PRINTS" id="PR00180">
    <property type="entry name" value="CRETINALDHBP"/>
</dbReference>
<dbReference type="SMART" id="SM01100">
    <property type="entry name" value="CRAL_TRIO_N"/>
    <property type="match status" value="1"/>
</dbReference>
<dbReference type="SMART" id="SM00516">
    <property type="entry name" value="SEC14"/>
    <property type="match status" value="1"/>
</dbReference>
<dbReference type="SUPFAM" id="SSF52087">
    <property type="entry name" value="CRAL/TRIO domain"/>
    <property type="match status" value="1"/>
</dbReference>
<dbReference type="SUPFAM" id="SSF46938">
    <property type="entry name" value="CRAL/TRIO N-terminal domain"/>
    <property type="match status" value="1"/>
</dbReference>
<dbReference type="PROSITE" id="PS50191">
    <property type="entry name" value="CRAL_TRIO"/>
    <property type="match status" value="1"/>
</dbReference>
<evidence type="ECO:0000255" key="1">
    <source>
        <dbReference type="PROSITE-ProRule" id="PRU00056"/>
    </source>
</evidence>
<evidence type="ECO:0000256" key="2">
    <source>
        <dbReference type="SAM" id="MobiDB-lite"/>
    </source>
</evidence>
<evidence type="ECO:0000303" key="3">
    <source>
    </source>
</evidence>
<evidence type="ECO:0000305" key="4"/>
<gene>
    <name type="primary">Ttpal</name>
</gene>
<organism>
    <name type="scientific">Mus musculus</name>
    <name type="common">Mouse</name>
    <dbReference type="NCBI Taxonomy" id="10090"/>
    <lineage>
        <taxon>Eukaryota</taxon>
        <taxon>Metazoa</taxon>
        <taxon>Chordata</taxon>
        <taxon>Craniata</taxon>
        <taxon>Vertebrata</taxon>
        <taxon>Euteleostomi</taxon>
        <taxon>Mammalia</taxon>
        <taxon>Eutheria</taxon>
        <taxon>Euarchontoglires</taxon>
        <taxon>Glires</taxon>
        <taxon>Rodentia</taxon>
        <taxon>Myomorpha</taxon>
        <taxon>Muroidea</taxon>
        <taxon>Muridae</taxon>
        <taxon>Murinae</taxon>
        <taxon>Mus</taxon>
        <taxon>Mus</taxon>
    </lineage>
</organism>